<keyword id="KW-0028">Amino-acid biosynthesis</keyword>
<keyword id="KW-0963">Cytoplasm</keyword>
<keyword id="KW-0368">Histidine biosynthesis</keyword>
<keyword id="KW-1185">Reference proteome</keyword>
<gene>
    <name evidence="1" type="primary">hisZ</name>
    <name type="ordered locus">GOX1447</name>
</gene>
<proteinExistence type="inferred from homology"/>
<evidence type="ECO:0000255" key="1">
    <source>
        <dbReference type="HAMAP-Rule" id="MF_00125"/>
    </source>
</evidence>
<protein>
    <recommendedName>
        <fullName evidence="1">ATP phosphoribosyltransferase regulatory subunit</fullName>
    </recommendedName>
</protein>
<feature type="chain" id="PRO_0000242837" description="ATP phosphoribosyltransferase regulatory subunit">
    <location>
        <begin position="1"/>
        <end position="379"/>
    </location>
</feature>
<comment type="function">
    <text evidence="1">Required for the first step of histidine biosynthesis. May allow the feedback regulation of ATP phosphoribosyltransferase activity by histidine.</text>
</comment>
<comment type="pathway">
    <text evidence="1">Amino-acid biosynthesis; L-histidine biosynthesis; L-histidine from 5-phospho-alpha-D-ribose 1-diphosphate: step 1/9.</text>
</comment>
<comment type="subunit">
    <text evidence="1">Heteromultimer composed of HisG and HisZ subunits.</text>
</comment>
<comment type="subcellular location">
    <subcellularLocation>
        <location evidence="1">Cytoplasm</location>
    </subcellularLocation>
</comment>
<comment type="miscellaneous">
    <text>This function is generally fulfilled by the C-terminal part of HisG, which is missing in some bacteria such as this one.</text>
</comment>
<comment type="similarity">
    <text evidence="1">Belongs to the class-II aminoacyl-tRNA synthetase family. HisZ subfamily.</text>
</comment>
<organism>
    <name type="scientific">Gluconobacter oxydans (strain 621H)</name>
    <name type="common">Gluconobacter suboxydans</name>
    <dbReference type="NCBI Taxonomy" id="290633"/>
    <lineage>
        <taxon>Bacteria</taxon>
        <taxon>Pseudomonadati</taxon>
        <taxon>Pseudomonadota</taxon>
        <taxon>Alphaproteobacteria</taxon>
        <taxon>Acetobacterales</taxon>
        <taxon>Acetobacteraceae</taxon>
        <taxon>Gluconobacter</taxon>
    </lineage>
</organism>
<dbReference type="EMBL" id="CP000009">
    <property type="protein sequence ID" value="AAW61196.1"/>
    <property type="molecule type" value="Genomic_DNA"/>
</dbReference>
<dbReference type="RefSeq" id="WP_011252983.1">
    <property type="nucleotide sequence ID" value="NC_006677.1"/>
</dbReference>
<dbReference type="SMR" id="Q5FR00"/>
<dbReference type="STRING" id="290633.GOX1447"/>
<dbReference type="KEGG" id="gox:GOX1447"/>
<dbReference type="eggNOG" id="COG3705">
    <property type="taxonomic scope" value="Bacteria"/>
</dbReference>
<dbReference type="HOGENOM" id="CLU_025113_0_1_5"/>
<dbReference type="UniPathway" id="UPA00031">
    <property type="reaction ID" value="UER00006"/>
</dbReference>
<dbReference type="Proteomes" id="UP000006375">
    <property type="component" value="Chromosome"/>
</dbReference>
<dbReference type="GO" id="GO:0005737">
    <property type="term" value="C:cytoplasm"/>
    <property type="evidence" value="ECO:0007669"/>
    <property type="project" value="UniProtKB-SubCell"/>
</dbReference>
<dbReference type="GO" id="GO:0004821">
    <property type="term" value="F:histidine-tRNA ligase activity"/>
    <property type="evidence" value="ECO:0007669"/>
    <property type="project" value="TreeGrafter"/>
</dbReference>
<dbReference type="GO" id="GO:0006427">
    <property type="term" value="P:histidyl-tRNA aminoacylation"/>
    <property type="evidence" value="ECO:0007669"/>
    <property type="project" value="TreeGrafter"/>
</dbReference>
<dbReference type="GO" id="GO:0000105">
    <property type="term" value="P:L-histidine biosynthetic process"/>
    <property type="evidence" value="ECO:0007669"/>
    <property type="project" value="UniProtKB-UniRule"/>
</dbReference>
<dbReference type="Gene3D" id="3.30.930.10">
    <property type="entry name" value="Bira Bifunctional Protein, Domain 2"/>
    <property type="match status" value="1"/>
</dbReference>
<dbReference type="HAMAP" id="MF_00125">
    <property type="entry name" value="HisZ"/>
    <property type="match status" value="1"/>
</dbReference>
<dbReference type="InterPro" id="IPR045864">
    <property type="entry name" value="aa-tRNA-synth_II/BPL/LPL"/>
</dbReference>
<dbReference type="InterPro" id="IPR041715">
    <property type="entry name" value="HisRS-like_core"/>
</dbReference>
<dbReference type="InterPro" id="IPR004516">
    <property type="entry name" value="HisRS/HisZ"/>
</dbReference>
<dbReference type="InterPro" id="IPR004517">
    <property type="entry name" value="HisZ"/>
</dbReference>
<dbReference type="PANTHER" id="PTHR43707:SF1">
    <property type="entry name" value="HISTIDINE--TRNA LIGASE, MITOCHONDRIAL-RELATED"/>
    <property type="match status" value="1"/>
</dbReference>
<dbReference type="PANTHER" id="PTHR43707">
    <property type="entry name" value="HISTIDYL-TRNA SYNTHETASE"/>
    <property type="match status" value="1"/>
</dbReference>
<dbReference type="Pfam" id="PF13393">
    <property type="entry name" value="tRNA-synt_His"/>
    <property type="match status" value="1"/>
</dbReference>
<dbReference type="SUPFAM" id="SSF55681">
    <property type="entry name" value="Class II aaRS and biotin synthetases"/>
    <property type="match status" value="1"/>
</dbReference>
<sequence>MSLYSETPSAALLPSGFADLLPGEAEAEARGIASVMEAFSRHGYQRVRPPLLEFETSLLGGSGESLAPQTFRLMDPNSHRMMALRPDMTTQIARIASIRLQDAPRPLRLSYSGSCIVVGTPGREADRQISQAGIELIGPDSAQADAEVIALGAKALAELGIEGVSFDLSMPALALGLIEGVIPEADREPLLHALDRKDASAVAELGGPIAGMLAVMLRAAGPADRALDLLASLDYPKDVVGYFERLAASVAAIRERSPDLRLTIDPVDFRGWRYHTGLCVTVFSTSSREELGRGGRYLAGQEPACGLTLRPQALLRAAPVSASRPRCYVPVDLDAASLSGLHKAGYATVSALSHDEDAAAQARHLRCTHVWKDGAARPL</sequence>
<accession>Q5FR00</accession>
<name>HISZ_GLUOX</name>
<reference key="1">
    <citation type="journal article" date="2005" name="Nat. Biotechnol.">
        <title>Complete genome sequence of the acetic acid bacterium Gluconobacter oxydans.</title>
        <authorList>
            <person name="Prust C."/>
            <person name="Hoffmeister M."/>
            <person name="Liesegang H."/>
            <person name="Wiezer A."/>
            <person name="Fricke W.F."/>
            <person name="Ehrenreich A."/>
            <person name="Gottschalk G."/>
            <person name="Deppenmeier U."/>
        </authorList>
    </citation>
    <scope>NUCLEOTIDE SEQUENCE [LARGE SCALE GENOMIC DNA]</scope>
    <source>
        <strain>621H</strain>
    </source>
</reference>